<sequence>MTDDLNKVWPSGLTVAEAEEVHKQLILGTRVFGGMALIAHFLAAAATPWLG</sequence>
<comment type="function">
    <text>Antenna complexes are light-harvesting systems, which transfer the excitation energy to the reaction centers.</text>
</comment>
<comment type="subunit">
    <text>The core complex is formed by different alpha and beta chains, binding bacteriochlorophyll molecules, and arranged most probably in tetrameric structures disposed around the reaction center. The non-pigmented gamma chains may constitute additional components.</text>
</comment>
<comment type="subcellular location">
    <subcellularLocation>
        <location>Cell inner membrane</location>
        <topology>Single-pass type II membrane protein</topology>
    </subcellularLocation>
</comment>
<comment type="similarity">
    <text evidence="3">Belongs to the antenna complex beta subunit family.</text>
</comment>
<proteinExistence type="evidence at protein level"/>
<evidence type="ECO:0000250" key="1"/>
<evidence type="ECO:0000255" key="2"/>
<evidence type="ECO:0000305" key="3"/>
<name>LHB2_CERS4</name>
<feature type="initiator methionine" description="Removed" evidence="1">
    <location>
        <position position="1"/>
    </location>
</feature>
<feature type="chain" id="PRO_0000099836" description="Light-harvesting protein B-800/850 beta chain">
    <location>
        <begin position="2"/>
        <end position="51"/>
    </location>
</feature>
<feature type="topological domain" description="Cytoplasmic" evidence="2">
    <location>
        <begin position="2"/>
        <end position="23"/>
    </location>
</feature>
<feature type="transmembrane region" description="Helical" evidence="2">
    <location>
        <begin position="24"/>
        <end position="46"/>
    </location>
</feature>
<feature type="topological domain" description="Periplasmic" evidence="2">
    <location>
        <begin position="47"/>
        <end position="51"/>
    </location>
</feature>
<feature type="binding site" description="axial binding residue" evidence="2">
    <location>
        <position position="22"/>
    </location>
    <ligand>
        <name>a bacteriochlorophyll</name>
        <dbReference type="ChEBI" id="CHEBI:38201"/>
    </ligand>
    <ligandPart>
        <name>Mg</name>
        <dbReference type="ChEBI" id="CHEBI:25107"/>
    </ligandPart>
</feature>
<feature type="binding site" description="axial binding residue" evidence="2">
    <location>
        <position position="40"/>
    </location>
    <ligand>
        <name>a bacteriochlorophyll</name>
        <dbReference type="ChEBI" id="CHEBI:38201"/>
    </ligand>
    <ligandPart>
        <name>Mg</name>
        <dbReference type="ChEBI" id="CHEBI:25107"/>
    </ligandPart>
</feature>
<reference key="1">
    <citation type="journal article" date="1987" name="J. Bacteriol.">
        <title>Cloning, DNA sequence, and expression of the Rhodobacter sphaeroides light-harvesting B800-850-alpha and B800-850-beta genes.</title>
        <authorList>
            <person name="Kiley P.J."/>
            <person name="Kaplan S."/>
        </authorList>
    </citation>
    <scope>NUCLEOTIDE SEQUENCE [GENOMIC DNA]</scope>
</reference>
<reference key="2">
    <citation type="journal article" date="1992" name="Mol. Microbiol.">
        <title>A putative anaerobic coproporphyrinogen III oxidase in Rhodobacter sphaeroides. II. Analysis of a region of the genome encoding hemF and the puc operon.</title>
        <authorList>
            <person name="Gibson L.C."/>
            <person name="McGlynn P."/>
            <person name="Chaudhri M."/>
            <person name="Hunter C.N."/>
        </authorList>
    </citation>
    <scope>NUCLEOTIDE SEQUENCE [GENOMIC DNA]</scope>
</reference>
<reference key="3">
    <citation type="journal article" date="2000" name="Nucleic Acids Res.">
        <title>DNA sequence analysis of the photosynthesis region of Rhodobacter sphaeroides 2.4.1.</title>
        <authorList>
            <person name="Choudhary M."/>
            <person name="Kaplan S."/>
        </authorList>
    </citation>
    <scope>NUCLEOTIDE SEQUENCE [GENOMIC DNA]</scope>
</reference>
<reference key="4">
    <citation type="submission" date="2005-09" db="EMBL/GenBank/DDBJ databases">
        <title>Complete sequence of chromosome 1 of Rhodobacter sphaeroides 2.4.1.</title>
        <authorList>
            <person name="Copeland A."/>
            <person name="Lucas S."/>
            <person name="Lapidus A."/>
            <person name="Barry K."/>
            <person name="Detter J.C."/>
            <person name="Glavina T."/>
            <person name="Hammon N."/>
            <person name="Israni S."/>
            <person name="Pitluck S."/>
            <person name="Richardson P."/>
            <person name="Mackenzie C."/>
            <person name="Choudhary M."/>
            <person name="Larimer F."/>
            <person name="Hauser L.J."/>
            <person name="Land M."/>
            <person name="Donohue T.J."/>
            <person name="Kaplan S."/>
        </authorList>
    </citation>
    <scope>NUCLEOTIDE SEQUENCE [LARGE SCALE GENOMIC DNA]</scope>
    <source>
        <strain>ATCC 17023 / DSM 158 / JCM 6121 / CCUG 31486 / LMG 2827 / NBRC 12203 / NCIMB 8253 / ATH 2.4.1.</strain>
    </source>
</reference>
<protein>
    <recommendedName>
        <fullName>Light-harvesting protein B-800/850 beta chain</fullName>
    </recommendedName>
    <alternativeName>
        <fullName>Antenna pigment protein beta chain</fullName>
    </alternativeName>
    <alternativeName>
        <fullName>LH-3B</fullName>
    </alternativeName>
</protein>
<dbReference type="EMBL" id="M16777">
    <property type="protein sequence ID" value="AAA26159.1"/>
    <property type="molecule type" value="Genomic_DNA"/>
</dbReference>
<dbReference type="EMBL" id="X68796">
    <property type="protein sequence ID" value="CAA48699.1"/>
    <property type="molecule type" value="Genomic_DNA"/>
</dbReference>
<dbReference type="EMBL" id="AF195122">
    <property type="protein sequence ID" value="AAF24247.1"/>
    <property type="molecule type" value="Genomic_DNA"/>
</dbReference>
<dbReference type="EMBL" id="CP000143">
    <property type="protein sequence ID" value="ABA79489.1"/>
    <property type="molecule type" value="Genomic_DNA"/>
</dbReference>
<dbReference type="PIR" id="B27087">
    <property type="entry name" value="LBRFBS"/>
</dbReference>
<dbReference type="RefSeq" id="YP_353390.1">
    <property type="nucleotide sequence ID" value="NC_007493.2"/>
</dbReference>
<dbReference type="PDB" id="7PBW">
    <property type="method" value="EM"/>
    <property type="resolution" value="2.10 A"/>
    <property type="chains" value="BA/BB/BC/BD/BE/BF/BG/BH/BI=5-51"/>
</dbReference>
<dbReference type="PDBsum" id="7PBW"/>
<dbReference type="EMDB" id="EMD-13307"/>
<dbReference type="SMR" id="Q3J145"/>
<dbReference type="STRING" id="272943.RSP_0314"/>
<dbReference type="EnsemblBacteria" id="ABA79489">
    <property type="protein sequence ID" value="ABA79489"/>
    <property type="gene ID" value="RSP_0314"/>
</dbReference>
<dbReference type="KEGG" id="rsp:RSP_0314"/>
<dbReference type="PATRIC" id="fig|272943.9.peg.2260"/>
<dbReference type="eggNOG" id="ENOG50331U4">
    <property type="taxonomic scope" value="Bacteria"/>
</dbReference>
<dbReference type="OrthoDB" id="7391998at2"/>
<dbReference type="PhylomeDB" id="Q3J145"/>
<dbReference type="Proteomes" id="UP000002703">
    <property type="component" value="Chromosome 1"/>
</dbReference>
<dbReference type="GO" id="GO:0005886">
    <property type="term" value="C:plasma membrane"/>
    <property type="evidence" value="ECO:0007669"/>
    <property type="project" value="UniProtKB-SubCell"/>
</dbReference>
<dbReference type="GO" id="GO:0030077">
    <property type="term" value="C:plasma membrane light-harvesting complex"/>
    <property type="evidence" value="ECO:0007669"/>
    <property type="project" value="InterPro"/>
</dbReference>
<dbReference type="GO" id="GO:0042314">
    <property type="term" value="F:bacteriochlorophyll binding"/>
    <property type="evidence" value="ECO:0007669"/>
    <property type="project" value="UniProtKB-KW"/>
</dbReference>
<dbReference type="GO" id="GO:0045156">
    <property type="term" value="F:electron transporter, transferring electrons within the cyclic electron transport pathway of photosynthesis activity"/>
    <property type="evidence" value="ECO:0007669"/>
    <property type="project" value="InterPro"/>
</dbReference>
<dbReference type="GO" id="GO:0046872">
    <property type="term" value="F:metal ion binding"/>
    <property type="evidence" value="ECO:0007669"/>
    <property type="project" value="UniProtKB-KW"/>
</dbReference>
<dbReference type="GO" id="GO:0019684">
    <property type="term" value="P:photosynthesis, light reaction"/>
    <property type="evidence" value="ECO:0007669"/>
    <property type="project" value="InterPro"/>
</dbReference>
<dbReference type="Gene3D" id="1.20.5.250">
    <property type="match status" value="1"/>
</dbReference>
<dbReference type="InterPro" id="IPR000066">
    <property type="entry name" value="Antenna_a/b"/>
</dbReference>
<dbReference type="InterPro" id="IPR023623">
    <property type="entry name" value="Antenna_beta_CS"/>
</dbReference>
<dbReference type="InterPro" id="IPR023624">
    <property type="entry name" value="Antenna_beta_dom_sf"/>
</dbReference>
<dbReference type="InterPro" id="IPR002362">
    <property type="entry name" value="LHB-1/5"/>
</dbReference>
<dbReference type="InterPro" id="IPR035889">
    <property type="entry name" value="Light-harvesting_complex"/>
</dbReference>
<dbReference type="NCBIfam" id="NF040862">
    <property type="entry name" value="pufB_517_ASD"/>
    <property type="match status" value="1"/>
</dbReference>
<dbReference type="Pfam" id="PF00556">
    <property type="entry name" value="LHC"/>
    <property type="match status" value="1"/>
</dbReference>
<dbReference type="PIRSF" id="PIRSF002900">
    <property type="entry name" value="Antenna_beta"/>
    <property type="match status" value="1"/>
</dbReference>
<dbReference type="PRINTS" id="PR00674">
    <property type="entry name" value="LIGHTHARVSTB"/>
</dbReference>
<dbReference type="SUPFAM" id="SSF56918">
    <property type="entry name" value="Light-harvesting complex subunits"/>
    <property type="match status" value="1"/>
</dbReference>
<dbReference type="PROSITE" id="PS00969">
    <property type="entry name" value="ANTENNA_COMP_BETA"/>
    <property type="match status" value="1"/>
</dbReference>
<gene>
    <name type="primary">pucB</name>
    <name type="ordered locus">RHOS4_19210</name>
    <name type="ORF">RSP_0314</name>
</gene>
<organism>
    <name type="scientific">Cereibacter sphaeroides (strain ATCC 17023 / DSM 158 / JCM 6121 / CCUG 31486 / LMG 2827 / NBRC 12203 / NCIMB 8253 / ATH 2.4.1.)</name>
    <name type="common">Rhodobacter sphaeroides</name>
    <dbReference type="NCBI Taxonomy" id="272943"/>
    <lineage>
        <taxon>Bacteria</taxon>
        <taxon>Pseudomonadati</taxon>
        <taxon>Pseudomonadota</taxon>
        <taxon>Alphaproteobacteria</taxon>
        <taxon>Rhodobacterales</taxon>
        <taxon>Paracoccaceae</taxon>
        <taxon>Cereibacter</taxon>
    </lineage>
</organism>
<keyword id="KW-0002">3D-structure</keyword>
<keyword id="KW-0042">Antenna complex</keyword>
<keyword id="KW-0076">Bacteriochlorophyll</keyword>
<keyword id="KW-0997">Cell inner membrane</keyword>
<keyword id="KW-1003">Cell membrane</keyword>
<keyword id="KW-0148">Chlorophyll</keyword>
<keyword id="KW-0157">Chromophore</keyword>
<keyword id="KW-0437">Light-harvesting polypeptide</keyword>
<keyword id="KW-0460">Magnesium</keyword>
<keyword id="KW-0472">Membrane</keyword>
<keyword id="KW-0479">Metal-binding</keyword>
<keyword id="KW-1185">Reference proteome</keyword>
<keyword id="KW-0812">Transmembrane</keyword>
<keyword id="KW-1133">Transmembrane helix</keyword>
<accession>Q3J145</accession>
<accession>P02952</accession>